<evidence type="ECO:0000255" key="1">
    <source>
        <dbReference type="HAMAP-Rule" id="MF_01328"/>
    </source>
</evidence>
<evidence type="ECO:0000305" key="2"/>
<sequence length="205" mass="22200">MKLDVIKLDGEAAGSVELDEALFGLEPRADILHRVVRWQRNKAQAGTHKVKTRSEVSYSTKKIYRQKGTGGARHGARSAPIFRKGGIYKGPTPRSHAHDLPKKFRKLGLKHALSAKAKAGELVVIDMATSEGKTATLAKQIKNLGWKRALVIDGAQVDAGFAKAAANIDTLDVLPSMGANVYDILKRDTLVLTKAGVEALEARLK</sequence>
<protein>
    <recommendedName>
        <fullName evidence="1">Large ribosomal subunit protein uL4</fullName>
    </recommendedName>
    <alternativeName>
        <fullName evidence="2">50S ribosomal protein L4</fullName>
    </alternativeName>
</protein>
<keyword id="KW-1185">Reference proteome</keyword>
<keyword id="KW-0687">Ribonucleoprotein</keyword>
<keyword id="KW-0689">Ribosomal protein</keyword>
<keyword id="KW-0694">RNA-binding</keyword>
<keyword id="KW-0699">rRNA-binding</keyword>
<accession>A8LM49</accession>
<organism>
    <name type="scientific">Dinoroseobacter shibae (strain DSM 16493 / NCIMB 14021 / DFL 12)</name>
    <dbReference type="NCBI Taxonomy" id="398580"/>
    <lineage>
        <taxon>Bacteria</taxon>
        <taxon>Pseudomonadati</taxon>
        <taxon>Pseudomonadota</taxon>
        <taxon>Alphaproteobacteria</taxon>
        <taxon>Rhodobacterales</taxon>
        <taxon>Roseobacteraceae</taxon>
        <taxon>Dinoroseobacter</taxon>
    </lineage>
</organism>
<proteinExistence type="inferred from homology"/>
<name>RL4_DINSH</name>
<dbReference type="EMBL" id="CP000830">
    <property type="protein sequence ID" value="ABV92026.1"/>
    <property type="molecule type" value="Genomic_DNA"/>
</dbReference>
<dbReference type="RefSeq" id="WP_012176957.1">
    <property type="nucleotide sequence ID" value="NC_009952.1"/>
</dbReference>
<dbReference type="SMR" id="A8LM49"/>
<dbReference type="STRING" id="398580.Dshi_0277"/>
<dbReference type="KEGG" id="dsh:Dshi_0277"/>
<dbReference type="eggNOG" id="COG0088">
    <property type="taxonomic scope" value="Bacteria"/>
</dbReference>
<dbReference type="HOGENOM" id="CLU_041575_5_1_5"/>
<dbReference type="OrthoDB" id="9803201at2"/>
<dbReference type="Proteomes" id="UP000006833">
    <property type="component" value="Chromosome"/>
</dbReference>
<dbReference type="GO" id="GO:1990904">
    <property type="term" value="C:ribonucleoprotein complex"/>
    <property type="evidence" value="ECO:0007669"/>
    <property type="project" value="UniProtKB-KW"/>
</dbReference>
<dbReference type="GO" id="GO:0005840">
    <property type="term" value="C:ribosome"/>
    <property type="evidence" value="ECO:0007669"/>
    <property type="project" value="UniProtKB-KW"/>
</dbReference>
<dbReference type="GO" id="GO:0019843">
    <property type="term" value="F:rRNA binding"/>
    <property type="evidence" value="ECO:0007669"/>
    <property type="project" value="UniProtKB-UniRule"/>
</dbReference>
<dbReference type="GO" id="GO:0003735">
    <property type="term" value="F:structural constituent of ribosome"/>
    <property type="evidence" value="ECO:0007669"/>
    <property type="project" value="InterPro"/>
</dbReference>
<dbReference type="GO" id="GO:0006412">
    <property type="term" value="P:translation"/>
    <property type="evidence" value="ECO:0007669"/>
    <property type="project" value="UniProtKB-UniRule"/>
</dbReference>
<dbReference type="Gene3D" id="3.40.1370.10">
    <property type="match status" value="1"/>
</dbReference>
<dbReference type="HAMAP" id="MF_01328_B">
    <property type="entry name" value="Ribosomal_uL4_B"/>
    <property type="match status" value="1"/>
</dbReference>
<dbReference type="InterPro" id="IPR002136">
    <property type="entry name" value="Ribosomal_uL4"/>
</dbReference>
<dbReference type="InterPro" id="IPR013005">
    <property type="entry name" value="Ribosomal_uL4-like"/>
</dbReference>
<dbReference type="InterPro" id="IPR023574">
    <property type="entry name" value="Ribosomal_uL4_dom_sf"/>
</dbReference>
<dbReference type="NCBIfam" id="TIGR03953">
    <property type="entry name" value="rplD_bact"/>
    <property type="match status" value="1"/>
</dbReference>
<dbReference type="PANTHER" id="PTHR10746">
    <property type="entry name" value="50S RIBOSOMAL PROTEIN L4"/>
    <property type="match status" value="1"/>
</dbReference>
<dbReference type="PANTHER" id="PTHR10746:SF6">
    <property type="entry name" value="LARGE RIBOSOMAL SUBUNIT PROTEIN UL4M"/>
    <property type="match status" value="1"/>
</dbReference>
<dbReference type="Pfam" id="PF00573">
    <property type="entry name" value="Ribosomal_L4"/>
    <property type="match status" value="1"/>
</dbReference>
<dbReference type="SUPFAM" id="SSF52166">
    <property type="entry name" value="Ribosomal protein L4"/>
    <property type="match status" value="1"/>
</dbReference>
<feature type="chain" id="PRO_1000086518" description="Large ribosomal subunit protein uL4">
    <location>
        <begin position="1"/>
        <end position="205"/>
    </location>
</feature>
<comment type="function">
    <text evidence="1">One of the primary rRNA binding proteins, this protein initially binds near the 5'-end of the 23S rRNA. It is important during the early stages of 50S assembly. It makes multiple contacts with different domains of the 23S rRNA in the assembled 50S subunit and ribosome.</text>
</comment>
<comment type="function">
    <text evidence="1">Forms part of the polypeptide exit tunnel.</text>
</comment>
<comment type="subunit">
    <text evidence="1">Part of the 50S ribosomal subunit.</text>
</comment>
<comment type="similarity">
    <text evidence="1">Belongs to the universal ribosomal protein uL4 family.</text>
</comment>
<reference key="1">
    <citation type="journal article" date="2010" name="ISME J.">
        <title>The complete genome sequence of the algal symbiont Dinoroseobacter shibae: a hitchhiker's guide to life in the sea.</title>
        <authorList>
            <person name="Wagner-Dobler I."/>
            <person name="Ballhausen B."/>
            <person name="Berger M."/>
            <person name="Brinkhoff T."/>
            <person name="Buchholz I."/>
            <person name="Bunk B."/>
            <person name="Cypionka H."/>
            <person name="Daniel R."/>
            <person name="Drepper T."/>
            <person name="Gerdts G."/>
            <person name="Hahnke S."/>
            <person name="Han C."/>
            <person name="Jahn D."/>
            <person name="Kalhoefer D."/>
            <person name="Kiss H."/>
            <person name="Klenk H.P."/>
            <person name="Kyrpides N."/>
            <person name="Liebl W."/>
            <person name="Liesegang H."/>
            <person name="Meincke L."/>
            <person name="Pati A."/>
            <person name="Petersen J."/>
            <person name="Piekarski T."/>
            <person name="Pommerenke C."/>
            <person name="Pradella S."/>
            <person name="Pukall R."/>
            <person name="Rabus R."/>
            <person name="Stackebrandt E."/>
            <person name="Thole S."/>
            <person name="Thompson L."/>
            <person name="Tielen P."/>
            <person name="Tomasch J."/>
            <person name="von Jan M."/>
            <person name="Wanphrut N."/>
            <person name="Wichels A."/>
            <person name="Zech H."/>
            <person name="Simon M."/>
        </authorList>
    </citation>
    <scope>NUCLEOTIDE SEQUENCE [LARGE SCALE GENOMIC DNA]</scope>
    <source>
        <strain>DSM 16493 / NCIMB 14021 / DFL 12</strain>
    </source>
</reference>
<gene>
    <name evidence="1" type="primary">rplD</name>
    <name type="ordered locus">Dshi_0277</name>
</gene>